<dbReference type="EMBL" id="AL009126">
    <property type="protein sequence ID" value="CAB15211.1"/>
    <property type="molecule type" value="Genomic_DNA"/>
</dbReference>
<dbReference type="PIR" id="C70026">
    <property type="entry name" value="C70026"/>
</dbReference>
<dbReference type="RefSeq" id="NP_391101.1">
    <property type="nucleotide sequence ID" value="NC_000964.3"/>
</dbReference>
<dbReference type="RefSeq" id="WP_003242597.1">
    <property type="nucleotide sequence ID" value="NZ_OZ025638.1"/>
</dbReference>
<dbReference type="SMR" id="O32118"/>
<dbReference type="FunCoup" id="O32118">
    <property type="interactions" value="23"/>
</dbReference>
<dbReference type="STRING" id="224308.BSU32210"/>
<dbReference type="PaxDb" id="224308-BSU32210"/>
<dbReference type="EnsemblBacteria" id="CAB15211">
    <property type="protein sequence ID" value="CAB15211"/>
    <property type="gene ID" value="BSU_32210"/>
</dbReference>
<dbReference type="GeneID" id="937202"/>
<dbReference type="KEGG" id="bsu:BSU32210"/>
<dbReference type="PATRIC" id="fig|224308.179.peg.3487"/>
<dbReference type="eggNOG" id="COG4837">
    <property type="taxonomic scope" value="Bacteria"/>
</dbReference>
<dbReference type="InParanoid" id="O32118"/>
<dbReference type="OrthoDB" id="2389679at2"/>
<dbReference type="PhylomeDB" id="O32118"/>
<dbReference type="BioCyc" id="BSUB:BSU32210-MONOMER"/>
<dbReference type="Proteomes" id="UP000001570">
    <property type="component" value="Chromosome"/>
</dbReference>
<dbReference type="Gene3D" id="3.40.30.30">
    <property type="entry name" value="Hypothetical protein sa0798"/>
    <property type="match status" value="1"/>
</dbReference>
<dbReference type="InterPro" id="IPR009190">
    <property type="entry name" value="DUF1462"/>
</dbReference>
<dbReference type="InterPro" id="IPR036249">
    <property type="entry name" value="Thioredoxin-like_sf"/>
</dbReference>
<dbReference type="InterPro" id="IPR038218">
    <property type="entry name" value="YuzD-like_sp"/>
</dbReference>
<dbReference type="Pfam" id="PF07315">
    <property type="entry name" value="DUF1462"/>
    <property type="match status" value="1"/>
</dbReference>
<dbReference type="PIRSF" id="PIRSF010603">
    <property type="entry name" value="UCP010603"/>
    <property type="match status" value="1"/>
</dbReference>
<dbReference type="SUPFAM" id="SSF52833">
    <property type="entry name" value="Thioredoxin-like"/>
    <property type="match status" value="1"/>
</dbReference>
<protein>
    <recommendedName>
        <fullName>Putative disulfide oxidoreductase YuzD</fullName>
    </recommendedName>
</protein>
<reference key="1">
    <citation type="journal article" date="1997" name="Nature">
        <title>The complete genome sequence of the Gram-positive bacterium Bacillus subtilis.</title>
        <authorList>
            <person name="Kunst F."/>
            <person name="Ogasawara N."/>
            <person name="Moszer I."/>
            <person name="Albertini A.M."/>
            <person name="Alloni G."/>
            <person name="Azevedo V."/>
            <person name="Bertero M.G."/>
            <person name="Bessieres P."/>
            <person name="Bolotin A."/>
            <person name="Borchert S."/>
            <person name="Borriss R."/>
            <person name="Boursier L."/>
            <person name="Brans A."/>
            <person name="Braun M."/>
            <person name="Brignell S.C."/>
            <person name="Bron S."/>
            <person name="Brouillet S."/>
            <person name="Bruschi C.V."/>
            <person name="Caldwell B."/>
            <person name="Capuano V."/>
            <person name="Carter N.M."/>
            <person name="Choi S.-K."/>
            <person name="Codani J.-J."/>
            <person name="Connerton I.F."/>
            <person name="Cummings N.J."/>
            <person name="Daniel R.A."/>
            <person name="Denizot F."/>
            <person name="Devine K.M."/>
            <person name="Duesterhoeft A."/>
            <person name="Ehrlich S.D."/>
            <person name="Emmerson P.T."/>
            <person name="Entian K.-D."/>
            <person name="Errington J."/>
            <person name="Fabret C."/>
            <person name="Ferrari E."/>
            <person name="Foulger D."/>
            <person name="Fritz C."/>
            <person name="Fujita M."/>
            <person name="Fujita Y."/>
            <person name="Fuma S."/>
            <person name="Galizzi A."/>
            <person name="Galleron N."/>
            <person name="Ghim S.-Y."/>
            <person name="Glaser P."/>
            <person name="Goffeau A."/>
            <person name="Golightly E.J."/>
            <person name="Grandi G."/>
            <person name="Guiseppi G."/>
            <person name="Guy B.J."/>
            <person name="Haga K."/>
            <person name="Haiech J."/>
            <person name="Harwood C.R."/>
            <person name="Henaut A."/>
            <person name="Hilbert H."/>
            <person name="Holsappel S."/>
            <person name="Hosono S."/>
            <person name="Hullo M.-F."/>
            <person name="Itaya M."/>
            <person name="Jones L.-M."/>
            <person name="Joris B."/>
            <person name="Karamata D."/>
            <person name="Kasahara Y."/>
            <person name="Klaerr-Blanchard M."/>
            <person name="Klein C."/>
            <person name="Kobayashi Y."/>
            <person name="Koetter P."/>
            <person name="Koningstein G."/>
            <person name="Krogh S."/>
            <person name="Kumano M."/>
            <person name="Kurita K."/>
            <person name="Lapidus A."/>
            <person name="Lardinois S."/>
            <person name="Lauber J."/>
            <person name="Lazarevic V."/>
            <person name="Lee S.-M."/>
            <person name="Levine A."/>
            <person name="Liu H."/>
            <person name="Masuda S."/>
            <person name="Mauel C."/>
            <person name="Medigue C."/>
            <person name="Medina N."/>
            <person name="Mellado R.P."/>
            <person name="Mizuno M."/>
            <person name="Moestl D."/>
            <person name="Nakai S."/>
            <person name="Noback M."/>
            <person name="Noone D."/>
            <person name="O'Reilly M."/>
            <person name="Ogawa K."/>
            <person name="Ogiwara A."/>
            <person name="Oudega B."/>
            <person name="Park S.-H."/>
            <person name="Parro V."/>
            <person name="Pohl T.M."/>
            <person name="Portetelle D."/>
            <person name="Porwollik S."/>
            <person name="Prescott A.M."/>
            <person name="Presecan E."/>
            <person name="Pujic P."/>
            <person name="Purnelle B."/>
            <person name="Rapoport G."/>
            <person name="Rey M."/>
            <person name="Reynolds S."/>
            <person name="Rieger M."/>
            <person name="Rivolta C."/>
            <person name="Rocha E."/>
            <person name="Roche B."/>
            <person name="Rose M."/>
            <person name="Sadaie Y."/>
            <person name="Sato T."/>
            <person name="Scanlan E."/>
            <person name="Schleich S."/>
            <person name="Schroeter R."/>
            <person name="Scoffone F."/>
            <person name="Sekiguchi J."/>
            <person name="Sekowska A."/>
            <person name="Seror S.J."/>
            <person name="Serror P."/>
            <person name="Shin B.-S."/>
            <person name="Soldo B."/>
            <person name="Sorokin A."/>
            <person name="Tacconi E."/>
            <person name="Takagi T."/>
            <person name="Takahashi H."/>
            <person name="Takemaru K."/>
            <person name="Takeuchi M."/>
            <person name="Tamakoshi A."/>
            <person name="Tanaka T."/>
            <person name="Terpstra P."/>
            <person name="Tognoni A."/>
            <person name="Tosato V."/>
            <person name="Uchiyama S."/>
            <person name="Vandenbol M."/>
            <person name="Vannier F."/>
            <person name="Vassarotti A."/>
            <person name="Viari A."/>
            <person name="Wambutt R."/>
            <person name="Wedler E."/>
            <person name="Wedler H."/>
            <person name="Weitzenegger T."/>
            <person name="Winters P."/>
            <person name="Wipat A."/>
            <person name="Yamamoto H."/>
            <person name="Yamane K."/>
            <person name="Yasumoto K."/>
            <person name="Yata K."/>
            <person name="Yoshida K."/>
            <person name="Yoshikawa H.-F."/>
            <person name="Zumstein E."/>
            <person name="Yoshikawa H."/>
            <person name="Danchin A."/>
        </authorList>
    </citation>
    <scope>NUCLEOTIDE SEQUENCE [LARGE SCALE GENOMIC DNA]</scope>
    <source>
        <strain>168</strain>
    </source>
</reference>
<reference key="2">
    <citation type="journal article" date="2001" name="J. Struct. Biol.">
        <title>Enhanced functional annotation of protein sequences via the use of structural descriptors.</title>
        <authorList>
            <person name="Di Gennaro J.A."/>
            <person name="Siew N."/>
            <person name="Hoffman B.T."/>
            <person name="Zhang L."/>
            <person name="Skolnick J."/>
            <person name="Neilson L.I."/>
            <person name="Fetrow J.S."/>
        </authorList>
    </citation>
    <scope>DISCUSSION OF FUNCTION</scope>
</reference>
<evidence type="ECO:0000255" key="1"/>
<proteinExistence type="predicted"/>
<feature type="chain" id="PRO_0000390502" description="Putative disulfide oxidoreductase YuzD">
    <location>
        <begin position="1"/>
        <end position="108"/>
    </location>
</feature>
<feature type="disulfide bond" description="Redox-active" evidence="1">
    <location>
        <begin position="16"/>
        <end position="19"/>
    </location>
</feature>
<keyword id="KW-1015">Disulfide bond</keyword>
<keyword id="KW-0676">Redox-active center</keyword>
<keyword id="KW-1185">Reference proteome</keyword>
<organism>
    <name type="scientific">Bacillus subtilis (strain 168)</name>
    <dbReference type="NCBI Taxonomy" id="224308"/>
    <lineage>
        <taxon>Bacteria</taxon>
        <taxon>Bacillati</taxon>
        <taxon>Bacillota</taxon>
        <taxon>Bacilli</taxon>
        <taxon>Bacillales</taxon>
        <taxon>Bacillaceae</taxon>
        <taxon>Bacillus</taxon>
    </lineage>
</organism>
<gene>
    <name type="primary">yuzD</name>
    <name type="ordered locus">BSU32210</name>
</gene>
<name>YUZD_BACSU</name>
<sequence length="108" mass="12659">MMKPVMLSVYGAENVCASCVNMPTAKDTYEWLEAALKRKYPNQPFEMQYIDIHEPPDNEHAKELAEKIRNDEYFYPLVLVEDKIVGEGNPKLKDVYEEMEKHGYTENR</sequence>
<accession>O32118</accession>